<gene>
    <name evidence="1" type="primary">psaJ</name>
    <name type="ordered locus">Heak293_Cp155</name>
</gene>
<name>PSAJ_HETA2</name>
<proteinExistence type="inferred from homology"/>
<reference key="1">
    <citation type="journal article" date="2008" name="BMC Genomics">
        <title>Chloroplast genome sequencing analysis of Heterosigma akashiwo CCMP452 (West Atlantic) and NIES293 (West Pacific) strains.</title>
        <authorList>
            <person name="Cattolico R.A."/>
            <person name="Jacobs M.A."/>
            <person name="Zhou Y."/>
            <person name="Chang J."/>
            <person name="Duplessis M."/>
            <person name="Lybrand T."/>
            <person name="McKay J."/>
            <person name="Ong H.C."/>
            <person name="Sims E."/>
            <person name="Rocap G."/>
        </authorList>
    </citation>
    <scope>NUCLEOTIDE SEQUENCE [LARGE SCALE GENOMIC DNA]</scope>
</reference>
<sequence length="41" mass="4667">MDNFKKYLSTAPVLLTVWLSITASGIMIINRLYPDPLIFPI</sequence>
<feature type="chain" id="PRO_0000354176" description="Photosystem I reaction center subunit IX">
    <location>
        <begin position="1"/>
        <end position="41"/>
    </location>
</feature>
<feature type="transmembrane region" description="Helical" evidence="1">
    <location>
        <begin position="7"/>
        <end position="29"/>
    </location>
</feature>
<evidence type="ECO:0000255" key="1">
    <source>
        <dbReference type="HAMAP-Rule" id="MF_00522"/>
    </source>
</evidence>
<geneLocation type="chloroplast"/>
<keyword id="KW-0150">Chloroplast</keyword>
<keyword id="KW-0472">Membrane</keyword>
<keyword id="KW-0602">Photosynthesis</keyword>
<keyword id="KW-0603">Photosystem I</keyword>
<keyword id="KW-0934">Plastid</keyword>
<keyword id="KW-0793">Thylakoid</keyword>
<keyword id="KW-0812">Transmembrane</keyword>
<keyword id="KW-1133">Transmembrane helix</keyword>
<comment type="function">
    <text evidence="1">May help in the organization of the PsaE and PsaF subunits.</text>
</comment>
<comment type="subcellular location">
    <subcellularLocation>
        <location evidence="1">Plastid</location>
        <location evidence="1">Chloroplast thylakoid membrane</location>
        <topology evidence="1">Single-pass membrane protein</topology>
    </subcellularLocation>
</comment>
<comment type="similarity">
    <text evidence="1">Belongs to the PsaJ family.</text>
</comment>
<dbReference type="EMBL" id="EU168190">
    <property type="protein sequence ID" value="ABV66062.1"/>
    <property type="molecule type" value="Genomic_DNA"/>
</dbReference>
<dbReference type="RefSeq" id="YP_001936456.1">
    <property type="nucleotide sequence ID" value="NC_010772.1"/>
</dbReference>
<dbReference type="SMR" id="B2XTG4"/>
<dbReference type="GeneID" id="6335738"/>
<dbReference type="GO" id="GO:0009535">
    <property type="term" value="C:chloroplast thylakoid membrane"/>
    <property type="evidence" value="ECO:0007669"/>
    <property type="project" value="UniProtKB-SubCell"/>
</dbReference>
<dbReference type="GO" id="GO:0009522">
    <property type="term" value="C:photosystem I"/>
    <property type="evidence" value="ECO:0007669"/>
    <property type="project" value="UniProtKB-KW"/>
</dbReference>
<dbReference type="GO" id="GO:0015979">
    <property type="term" value="P:photosynthesis"/>
    <property type="evidence" value="ECO:0007669"/>
    <property type="project" value="UniProtKB-UniRule"/>
</dbReference>
<dbReference type="Gene3D" id="1.20.5.510">
    <property type="entry name" value="Single helix bin"/>
    <property type="match status" value="1"/>
</dbReference>
<dbReference type="HAMAP" id="MF_00522">
    <property type="entry name" value="PSI_PsaJ"/>
    <property type="match status" value="1"/>
</dbReference>
<dbReference type="InterPro" id="IPR002615">
    <property type="entry name" value="PSI_PsaJ"/>
</dbReference>
<dbReference type="InterPro" id="IPR036062">
    <property type="entry name" value="PSI_PsaJ_sf"/>
</dbReference>
<dbReference type="PANTHER" id="PTHR36082">
    <property type="match status" value="1"/>
</dbReference>
<dbReference type="PANTHER" id="PTHR36082:SF2">
    <property type="entry name" value="PHOTOSYSTEM I REACTION CENTER SUBUNIT IX"/>
    <property type="match status" value="1"/>
</dbReference>
<dbReference type="Pfam" id="PF01701">
    <property type="entry name" value="PSI_PsaJ"/>
    <property type="match status" value="1"/>
</dbReference>
<dbReference type="SUPFAM" id="SSF81544">
    <property type="entry name" value="Subunit IX of photosystem I reaction centre, PsaJ"/>
    <property type="match status" value="1"/>
</dbReference>
<organism>
    <name type="scientific">Heterosigma akashiwo (strain NIES-293 / 8280G21-1)</name>
    <dbReference type="NCBI Taxonomy" id="536047"/>
    <lineage>
        <taxon>Eukaryota</taxon>
        <taxon>Sar</taxon>
        <taxon>Stramenopiles</taxon>
        <taxon>Ochrophyta</taxon>
        <taxon>Raphidophyceae</taxon>
        <taxon>Chattonellales</taxon>
        <taxon>Chattonellaceae</taxon>
        <taxon>Heterosigma</taxon>
    </lineage>
</organism>
<protein>
    <recommendedName>
        <fullName evidence="1">Photosystem I reaction center subunit IX</fullName>
    </recommendedName>
    <alternativeName>
        <fullName evidence="1">PSI-J</fullName>
    </alternativeName>
</protein>
<accession>B2XTG4</accession>